<protein>
    <recommendedName>
        <fullName>Uncharacterized protein 007R</fullName>
    </recommendedName>
</protein>
<proteinExistence type="predicted"/>
<organism>
    <name type="scientific">Invertebrate iridescent virus 3</name>
    <name type="common">IIV-3</name>
    <name type="synonym">Mosquito iridescent virus</name>
    <dbReference type="NCBI Taxonomy" id="345201"/>
    <lineage>
        <taxon>Viruses</taxon>
        <taxon>Varidnaviria</taxon>
        <taxon>Bamfordvirae</taxon>
        <taxon>Nucleocytoviricota</taxon>
        <taxon>Megaviricetes</taxon>
        <taxon>Pimascovirales</taxon>
        <taxon>Iridoviridae</taxon>
        <taxon>Betairidovirinae</taxon>
        <taxon>Chloriridovirus</taxon>
    </lineage>
</organism>
<sequence>MEAKNITIDNTTYNFFKFYNINQPLTNLKYLNSERLCFSNAVMGKIVDDASTITITYHRVYFGISGPKPRQVADLGEYYDVNELLNYDTYTKTQEFAQKYNSLVKPTIDAKNWSGNELVLLVGNEWYCKTFGKAGSKNVFLYNMIPTIYRDEPQHQEQILKKFMFFNATKNVEQNPNFLDNVPEEYYHLLLPKSWVEKNLSDKYRKIMETEHKPLVFSCEPAFSFGLCRNTQDKNESYQLSLCLYEREKPRDAEIVWAAKYDELAAMVRDYLKKTPEFKKYRSFISCMKGLSWKNNEIGDKDGPKLYPKVIFNRKKGEFVTIFTKDDDVEPETIEDPRTILDRRCVVQAALRLESVFVHNKVAIQLRINDVLISEWKEASSKPQPLILRRHRFTKPSSSVAKSTSPSLRNSGSDESDLNQSDSDKEDERVVPVPKTKRIVKTVKLPN</sequence>
<evidence type="ECO:0000256" key="1">
    <source>
        <dbReference type="SAM" id="MobiDB-lite"/>
    </source>
</evidence>
<name>007R_IIV3</name>
<accession>Q197F3</accession>
<organismHost>
    <name type="scientific">Aedes vexans</name>
    <name type="common">Inland floodwater mosquito</name>
    <name type="synonym">Culex vexans</name>
    <dbReference type="NCBI Taxonomy" id="7163"/>
</organismHost>
<organismHost>
    <name type="scientific">Culex territans</name>
    <dbReference type="NCBI Taxonomy" id="42431"/>
</organismHost>
<organismHost>
    <name type="scientific">Culiseta annulata</name>
    <dbReference type="NCBI Taxonomy" id="332058"/>
</organismHost>
<organismHost>
    <name type="scientific">Ochlerotatus sollicitans</name>
    <name type="common">eastern saltmarsh mosquito</name>
    <dbReference type="NCBI Taxonomy" id="310513"/>
</organismHost>
<organismHost>
    <name type="scientific">Ochlerotatus taeniorhynchus</name>
    <name type="common">Black salt marsh mosquito</name>
    <name type="synonym">Aedes taeniorhynchus</name>
    <dbReference type="NCBI Taxonomy" id="329105"/>
</organismHost>
<organismHost>
    <name type="scientific">Psorophora ferox</name>
    <dbReference type="NCBI Taxonomy" id="7183"/>
</organismHost>
<reference key="1">
    <citation type="journal article" date="2006" name="J. Virol.">
        <title>Genome of invertebrate iridescent virus type 3 (mosquito iridescent virus).</title>
        <authorList>
            <person name="Delhon G."/>
            <person name="Tulman E.R."/>
            <person name="Afonso C.L."/>
            <person name="Lu Z."/>
            <person name="Becnel J.J."/>
            <person name="Moser B.A."/>
            <person name="Kutish G.F."/>
            <person name="Rock D.L."/>
        </authorList>
    </citation>
    <scope>NUCLEOTIDE SEQUENCE [LARGE SCALE GENOMIC DNA]</scope>
</reference>
<feature type="chain" id="PRO_0000377941" description="Uncharacterized protein 007R">
    <location>
        <begin position="1"/>
        <end position="447"/>
    </location>
</feature>
<feature type="region of interest" description="Disordered" evidence="1">
    <location>
        <begin position="392"/>
        <end position="435"/>
    </location>
</feature>
<feature type="compositionally biased region" description="Low complexity" evidence="1">
    <location>
        <begin position="395"/>
        <end position="407"/>
    </location>
</feature>
<feature type="compositionally biased region" description="Polar residues" evidence="1">
    <location>
        <begin position="408"/>
        <end position="421"/>
    </location>
</feature>
<gene>
    <name type="ORF">IIV3-007R</name>
</gene>
<dbReference type="EMBL" id="DQ643392">
    <property type="protein sequence ID" value="ABF82037.1"/>
    <property type="molecule type" value="Genomic_DNA"/>
</dbReference>
<dbReference type="RefSeq" id="YP_654579.1">
    <property type="nucleotide sequence ID" value="NC_008187.1"/>
</dbReference>
<dbReference type="KEGG" id="vg:4156256"/>
<dbReference type="OrthoDB" id="9237at10239"/>
<dbReference type="Proteomes" id="UP000001358">
    <property type="component" value="Genome"/>
</dbReference>
<dbReference type="InterPro" id="IPR024416">
    <property type="entry name" value="DUF2738"/>
</dbReference>
<dbReference type="Pfam" id="PF10927">
    <property type="entry name" value="DUF2738"/>
    <property type="match status" value="1"/>
</dbReference>
<keyword id="KW-1185">Reference proteome</keyword>